<gene>
    <name evidence="1" type="primary">ravA</name>
    <name type="ordered locus">ECH74115_5182</name>
</gene>
<evidence type="ECO:0000255" key="1">
    <source>
        <dbReference type="HAMAP-Rule" id="MF_01625"/>
    </source>
</evidence>
<protein>
    <recommendedName>
        <fullName evidence="1">Regulatory ATPase RavA</fullName>
        <ecNumber evidence="1">3.6.1.-</ecNumber>
    </recommendedName>
    <alternativeName>
        <fullName evidence="1">Regulatory ATPase variant A</fullName>
    </alternativeName>
</protein>
<reference key="1">
    <citation type="journal article" date="2011" name="Proc. Natl. Acad. Sci. U.S.A.">
        <title>Genomic anatomy of Escherichia coli O157:H7 outbreaks.</title>
        <authorList>
            <person name="Eppinger M."/>
            <person name="Mammel M.K."/>
            <person name="Leclerc J.E."/>
            <person name="Ravel J."/>
            <person name="Cebula T.A."/>
        </authorList>
    </citation>
    <scope>NUCLEOTIDE SEQUENCE [LARGE SCALE GENOMIC DNA]</scope>
    <source>
        <strain>EC4115 / EHEC</strain>
    </source>
</reference>
<dbReference type="EC" id="3.6.1.-" evidence="1"/>
<dbReference type="EMBL" id="CP001164">
    <property type="protein sequence ID" value="ACI37347.1"/>
    <property type="molecule type" value="Genomic_DNA"/>
</dbReference>
<dbReference type="RefSeq" id="WP_001301541.1">
    <property type="nucleotide sequence ID" value="NC_011353.1"/>
</dbReference>
<dbReference type="SMR" id="B5YY04"/>
<dbReference type="KEGG" id="ecf:ECH74115_5182"/>
<dbReference type="HOGENOM" id="CLU_018678_1_0_6"/>
<dbReference type="GO" id="GO:0005737">
    <property type="term" value="C:cytoplasm"/>
    <property type="evidence" value="ECO:0007669"/>
    <property type="project" value="UniProtKB-SubCell"/>
</dbReference>
<dbReference type="GO" id="GO:0005524">
    <property type="term" value="F:ATP binding"/>
    <property type="evidence" value="ECO:0007669"/>
    <property type="project" value="UniProtKB-KW"/>
</dbReference>
<dbReference type="GO" id="GO:0016887">
    <property type="term" value="F:ATP hydrolysis activity"/>
    <property type="evidence" value="ECO:0007669"/>
    <property type="project" value="UniProtKB-UniRule"/>
</dbReference>
<dbReference type="CDD" id="cd00009">
    <property type="entry name" value="AAA"/>
    <property type="match status" value="1"/>
</dbReference>
<dbReference type="FunFam" id="3.40.50.300:FF:000410">
    <property type="entry name" value="ATPase RavA"/>
    <property type="match status" value="1"/>
</dbReference>
<dbReference type="Gene3D" id="1.20.58.1510">
    <property type="match status" value="1"/>
</dbReference>
<dbReference type="Gene3D" id="2.40.128.430">
    <property type="match status" value="1"/>
</dbReference>
<dbReference type="Gene3D" id="3.40.50.300">
    <property type="entry name" value="P-loop containing nucleotide triphosphate hydrolases"/>
    <property type="match status" value="1"/>
</dbReference>
<dbReference type="HAMAP" id="MF_01625">
    <property type="entry name" value="ATPase_RavA"/>
    <property type="match status" value="1"/>
</dbReference>
<dbReference type="InterPro" id="IPR003593">
    <property type="entry name" value="AAA+_ATPase"/>
</dbReference>
<dbReference type="InterPro" id="IPR023671">
    <property type="entry name" value="ATPase_RavA"/>
</dbReference>
<dbReference type="InterPro" id="IPR022547">
    <property type="entry name" value="ATPase_RavA_C"/>
</dbReference>
<dbReference type="InterPro" id="IPR045427">
    <property type="entry name" value="MoxR"/>
</dbReference>
<dbReference type="InterPro" id="IPR027417">
    <property type="entry name" value="P-loop_NTPase"/>
</dbReference>
<dbReference type="InterPro" id="IPR041538">
    <property type="entry name" value="RavA-like_AAA_lid"/>
</dbReference>
<dbReference type="InterPro" id="IPR050513">
    <property type="entry name" value="RavA_ATPases"/>
</dbReference>
<dbReference type="InterPro" id="IPR046898">
    <property type="entry name" value="RavA_LARA_dom"/>
</dbReference>
<dbReference type="InterPro" id="IPR046932">
    <property type="entry name" value="RavA_LARA_sf"/>
</dbReference>
<dbReference type="NCBIfam" id="NF010054">
    <property type="entry name" value="PRK13531.1"/>
    <property type="match status" value="1"/>
</dbReference>
<dbReference type="PANTHER" id="PTHR32204">
    <property type="entry name" value="ATPASE RAVA"/>
    <property type="match status" value="1"/>
</dbReference>
<dbReference type="PANTHER" id="PTHR32204:SF0">
    <property type="entry name" value="ATPASE RAVA"/>
    <property type="match status" value="1"/>
</dbReference>
<dbReference type="Pfam" id="PF17868">
    <property type="entry name" value="AAA_lid_8"/>
    <property type="match status" value="1"/>
</dbReference>
<dbReference type="Pfam" id="PF12592">
    <property type="entry name" value="ATPase_RavA_C"/>
    <property type="match status" value="1"/>
</dbReference>
<dbReference type="Pfam" id="PF20030">
    <property type="entry name" value="bpMoxR"/>
    <property type="match status" value="1"/>
</dbReference>
<dbReference type="Pfam" id="PF20265">
    <property type="entry name" value="LARA_dom"/>
    <property type="match status" value="1"/>
</dbReference>
<dbReference type="SMART" id="SM00382">
    <property type="entry name" value="AAA"/>
    <property type="match status" value="1"/>
</dbReference>
<dbReference type="SUPFAM" id="SSF52540">
    <property type="entry name" value="P-loop containing nucleoside triphosphate hydrolases"/>
    <property type="match status" value="1"/>
</dbReference>
<sequence>MAHPHLLAERISRLSSSLEKGLYERSHAIRLCLLAALSGESVFLLGPPGIAKSLIARRLKFAFQNARAFEYLMTRFSTPEEVFGPLSIQALKDEGRYERLTSGYLPEAEIVFLDEIWKAGPAILNTLLTAINERQFRNGAHVEKIPMRLLVAASNELPEADSSLEALYDRMLIRLWLDKVQDKANFRSMLTSQQDENDNPVPASLQVTDEEYERWQKEIGEITLPDHVFELIFMLRQQLDKLPDAPYVSDRRWKKAIRLLQASAFFSGRSAVAPVDLILLKDCLWYDAQSLNLIQQQIDVLMTGHAWQQQGMLTRLGAIVQRHLQLQQQQSDKTALTVIRLGGIFSRRQQYQLPVNVTASTLTLLLQKPLKLHNMEVVHISFERSALEQWLSKGGEIRGKLNGIGFAQKLNLEVDSAQHLVVRDVSLQGSTLALPGSSAEGLPGEIKQQLEELESDWRKQHALFSEQQRCLFIPGDWLGRIEASLQDVGAQIRQAQQC</sequence>
<proteinExistence type="inferred from homology"/>
<keyword id="KW-0067">ATP-binding</keyword>
<keyword id="KW-0143">Chaperone</keyword>
<keyword id="KW-0963">Cytoplasm</keyword>
<keyword id="KW-0378">Hydrolase</keyword>
<keyword id="KW-0547">Nucleotide-binding</keyword>
<organism>
    <name type="scientific">Escherichia coli O157:H7 (strain EC4115 / EHEC)</name>
    <dbReference type="NCBI Taxonomy" id="444450"/>
    <lineage>
        <taxon>Bacteria</taxon>
        <taxon>Pseudomonadati</taxon>
        <taxon>Pseudomonadota</taxon>
        <taxon>Gammaproteobacteria</taxon>
        <taxon>Enterobacterales</taxon>
        <taxon>Enterobacteriaceae</taxon>
        <taxon>Escherichia</taxon>
    </lineage>
</organism>
<accession>B5YY04</accession>
<comment type="function">
    <text evidence="1">Component of the RavA-ViaA chaperone complex, which may act on the membrane to optimize the function of some of the respiratory chains. RavA functions as an ATPase.</text>
</comment>
<comment type="catalytic activity">
    <reaction evidence="1">
        <text>ATP + H2O = ADP + phosphate + H(+)</text>
        <dbReference type="Rhea" id="RHEA:13065"/>
        <dbReference type="ChEBI" id="CHEBI:15377"/>
        <dbReference type="ChEBI" id="CHEBI:15378"/>
        <dbReference type="ChEBI" id="CHEBI:30616"/>
        <dbReference type="ChEBI" id="CHEBI:43474"/>
        <dbReference type="ChEBI" id="CHEBI:456216"/>
    </reaction>
</comment>
<comment type="activity regulation">
    <text evidence="1">ATPase activity is stimulated by ViaA.</text>
</comment>
<comment type="subunit">
    <text evidence="1">Homohexamer. Interacts with ViaA.</text>
</comment>
<comment type="subcellular location">
    <subcellularLocation>
        <location evidence="1">Cytoplasm</location>
    </subcellularLocation>
</comment>
<comment type="similarity">
    <text evidence="1">Belongs to the RavA family.</text>
</comment>
<feature type="chain" id="PRO_1000186124" description="Regulatory ATPase RavA">
    <location>
        <begin position="1"/>
        <end position="498"/>
    </location>
</feature>
<feature type="binding site" evidence="1">
    <location>
        <position position="23"/>
    </location>
    <ligand>
        <name>ADP</name>
        <dbReference type="ChEBI" id="CHEBI:456216"/>
    </ligand>
</feature>
<feature type="binding site" evidence="1">
    <location>
        <position position="49"/>
    </location>
    <ligand>
        <name>ADP</name>
        <dbReference type="ChEBI" id="CHEBI:456216"/>
    </ligand>
</feature>
<feature type="binding site" evidence="1">
    <location>
        <position position="50"/>
    </location>
    <ligand>
        <name>ADP</name>
        <dbReference type="ChEBI" id="CHEBI:456216"/>
    </ligand>
</feature>
<feature type="binding site" evidence="1">
    <location>
        <position position="51"/>
    </location>
    <ligand>
        <name>ADP</name>
        <dbReference type="ChEBI" id="CHEBI:456216"/>
    </ligand>
</feature>
<feature type="binding site" evidence="1">
    <location>
        <position position="52"/>
    </location>
    <ligand>
        <name>ADP</name>
        <dbReference type="ChEBI" id="CHEBI:456216"/>
    </ligand>
</feature>
<feature type="binding site" evidence="1">
    <location>
        <position position="53"/>
    </location>
    <ligand>
        <name>ADP</name>
        <dbReference type="ChEBI" id="CHEBI:456216"/>
    </ligand>
</feature>
<feature type="binding site" evidence="1">
    <location>
        <position position="54"/>
    </location>
    <ligand>
        <name>ADP</name>
        <dbReference type="ChEBI" id="CHEBI:456216"/>
    </ligand>
</feature>
<feature type="binding site" evidence="1">
    <location>
        <position position="196"/>
    </location>
    <ligand>
        <name>ADP</name>
        <dbReference type="ChEBI" id="CHEBI:456216"/>
    </ligand>
</feature>
<name>RAVA_ECO5E</name>